<name>TREA_XANOM</name>
<organism>
    <name type="scientific">Xanthomonas oryzae pv. oryzae (strain MAFF 311018)</name>
    <dbReference type="NCBI Taxonomy" id="342109"/>
    <lineage>
        <taxon>Bacteria</taxon>
        <taxon>Pseudomonadati</taxon>
        <taxon>Pseudomonadota</taxon>
        <taxon>Gammaproteobacteria</taxon>
        <taxon>Lysobacterales</taxon>
        <taxon>Lysobacteraceae</taxon>
        <taxon>Xanthomonas</taxon>
    </lineage>
</organism>
<comment type="function">
    <text evidence="1">Provides the cells with the ability to utilize trehalose at high osmolarity by splitting it into glucose molecules that can subsequently be taken up by the phosphotransferase-mediated uptake system.</text>
</comment>
<comment type="catalytic activity">
    <reaction evidence="1">
        <text>alpha,alpha-trehalose + H2O = alpha-D-glucose + beta-D-glucose</text>
        <dbReference type="Rhea" id="RHEA:32675"/>
        <dbReference type="ChEBI" id="CHEBI:15377"/>
        <dbReference type="ChEBI" id="CHEBI:15903"/>
        <dbReference type="ChEBI" id="CHEBI:16551"/>
        <dbReference type="ChEBI" id="CHEBI:17925"/>
        <dbReference type="EC" id="3.2.1.28"/>
    </reaction>
</comment>
<comment type="subcellular location">
    <subcellularLocation>
        <location evidence="1">Periplasm</location>
    </subcellularLocation>
</comment>
<comment type="similarity">
    <text evidence="1">Belongs to the glycosyl hydrolase 37 family.</text>
</comment>
<feature type="signal peptide" evidence="1">
    <location>
        <begin position="1"/>
        <end position="39"/>
    </location>
</feature>
<feature type="chain" id="PRO_1000064460" description="Periplasmic trehalase">
    <location>
        <begin position="40"/>
        <end position="568"/>
    </location>
</feature>
<feature type="active site" description="Proton donor/acceptor" evidence="1">
    <location>
        <position position="329"/>
    </location>
</feature>
<feature type="active site" description="Proton donor/acceptor" evidence="1">
    <location>
        <position position="511"/>
    </location>
</feature>
<feature type="binding site" evidence="1">
    <location>
        <position position="169"/>
    </location>
    <ligand>
        <name>substrate</name>
    </ligand>
</feature>
<feature type="binding site" evidence="1">
    <location>
        <begin position="176"/>
        <end position="177"/>
    </location>
    <ligand>
        <name>substrate</name>
    </ligand>
</feature>
<feature type="binding site" evidence="1">
    <location>
        <position position="213"/>
    </location>
    <ligand>
        <name>substrate</name>
    </ligand>
</feature>
<feature type="binding site" evidence="1">
    <location>
        <begin position="222"/>
        <end position="224"/>
    </location>
    <ligand>
        <name>substrate</name>
    </ligand>
</feature>
<feature type="binding site" evidence="1">
    <location>
        <begin position="294"/>
        <end position="296"/>
    </location>
    <ligand>
        <name>substrate</name>
    </ligand>
</feature>
<feature type="binding site" evidence="1">
    <location>
        <position position="327"/>
    </location>
    <ligand>
        <name>substrate</name>
    </ligand>
</feature>
<feature type="binding site" evidence="1">
    <location>
        <position position="526"/>
    </location>
    <ligand>
        <name>substrate</name>
    </ligand>
</feature>
<dbReference type="EC" id="3.2.1.28" evidence="1"/>
<dbReference type="EMBL" id="AP008229">
    <property type="protein sequence ID" value="BAE70554.1"/>
    <property type="molecule type" value="Genomic_DNA"/>
</dbReference>
<dbReference type="SMR" id="Q2NYS3"/>
<dbReference type="CAZy" id="GH37">
    <property type="family name" value="Glycoside Hydrolase Family 37"/>
</dbReference>
<dbReference type="KEGG" id="xom:XOO3799"/>
<dbReference type="HOGENOM" id="CLU_006451_3_1_6"/>
<dbReference type="GO" id="GO:0042597">
    <property type="term" value="C:periplasmic space"/>
    <property type="evidence" value="ECO:0007669"/>
    <property type="project" value="UniProtKB-SubCell"/>
</dbReference>
<dbReference type="GO" id="GO:0004555">
    <property type="term" value="F:alpha,alpha-trehalase activity"/>
    <property type="evidence" value="ECO:0007669"/>
    <property type="project" value="UniProtKB-UniRule"/>
</dbReference>
<dbReference type="GO" id="GO:0071474">
    <property type="term" value="P:cellular hyperosmotic response"/>
    <property type="evidence" value="ECO:0007669"/>
    <property type="project" value="InterPro"/>
</dbReference>
<dbReference type="GO" id="GO:0005993">
    <property type="term" value="P:trehalose catabolic process"/>
    <property type="evidence" value="ECO:0007669"/>
    <property type="project" value="InterPro"/>
</dbReference>
<dbReference type="FunFam" id="1.50.10.10:FF:000003">
    <property type="entry name" value="Cytoplasmic trehalase"/>
    <property type="match status" value="1"/>
</dbReference>
<dbReference type="Gene3D" id="1.50.10.10">
    <property type="match status" value="1"/>
</dbReference>
<dbReference type="HAMAP" id="MF_01060">
    <property type="entry name" value="Peripl_trehalase"/>
    <property type="match status" value="1"/>
</dbReference>
<dbReference type="InterPro" id="IPR008928">
    <property type="entry name" value="6-hairpin_glycosidase_sf"/>
</dbReference>
<dbReference type="InterPro" id="IPR012341">
    <property type="entry name" value="6hp_glycosidase-like_sf"/>
</dbReference>
<dbReference type="InterPro" id="IPR001661">
    <property type="entry name" value="Glyco_hydro_37"/>
</dbReference>
<dbReference type="InterPro" id="IPR018232">
    <property type="entry name" value="Glyco_hydro_37_CS"/>
</dbReference>
<dbReference type="InterPro" id="IPR023720">
    <property type="entry name" value="Trehalase_periplasmic"/>
</dbReference>
<dbReference type="NCBIfam" id="NF009773">
    <property type="entry name" value="PRK13270.1"/>
    <property type="match status" value="1"/>
</dbReference>
<dbReference type="NCBIfam" id="NF009774">
    <property type="entry name" value="PRK13271.1"/>
    <property type="match status" value="1"/>
</dbReference>
<dbReference type="NCBIfam" id="NF009775">
    <property type="entry name" value="PRK13272.1"/>
    <property type="match status" value="1"/>
</dbReference>
<dbReference type="PANTHER" id="PTHR23403">
    <property type="entry name" value="TREHALASE"/>
    <property type="match status" value="1"/>
</dbReference>
<dbReference type="PANTHER" id="PTHR23403:SF1">
    <property type="entry name" value="TREHALASE"/>
    <property type="match status" value="1"/>
</dbReference>
<dbReference type="Pfam" id="PF01204">
    <property type="entry name" value="Trehalase"/>
    <property type="match status" value="1"/>
</dbReference>
<dbReference type="PRINTS" id="PR00744">
    <property type="entry name" value="GLHYDRLASE37"/>
</dbReference>
<dbReference type="SUPFAM" id="SSF48208">
    <property type="entry name" value="Six-hairpin glycosidases"/>
    <property type="match status" value="1"/>
</dbReference>
<dbReference type="PROSITE" id="PS00927">
    <property type="entry name" value="TREHALASE_1"/>
    <property type="match status" value="1"/>
</dbReference>
<dbReference type="PROSITE" id="PS00928">
    <property type="entry name" value="TREHALASE_2"/>
    <property type="match status" value="1"/>
</dbReference>
<accession>Q2NYS3</accession>
<proteinExistence type="inferred from homology"/>
<keyword id="KW-0326">Glycosidase</keyword>
<keyword id="KW-0378">Hydrolase</keyword>
<keyword id="KW-0574">Periplasm</keyword>
<keyword id="KW-0732">Signal</keyword>
<gene>
    <name evidence="1" type="primary">treA</name>
    <name type="ordered locus">XOO3799</name>
</gene>
<protein>
    <recommendedName>
        <fullName evidence="1">Periplasmic trehalase</fullName>
        <ecNumber evidence="1">3.2.1.28</ecNumber>
    </recommendedName>
    <alternativeName>
        <fullName evidence="1">Alpha,alpha-trehalase</fullName>
    </alternativeName>
    <alternativeName>
        <fullName evidence="1">Alpha,alpha-trehalose glucohydrolase</fullName>
    </alternativeName>
</protein>
<reference key="1">
    <citation type="journal article" date="2005" name="Jpn. Agric. Res. Q.">
        <title>Genome sequence of Xanthomonas oryzae pv. oryzae suggests contribution of large numbers of effector genes and insertion sequences to its race diversity.</title>
        <authorList>
            <person name="Ochiai H."/>
            <person name="Inoue Y."/>
            <person name="Takeya M."/>
            <person name="Sasaki A."/>
            <person name="Kaku H."/>
        </authorList>
    </citation>
    <scope>NUCLEOTIDE SEQUENCE [LARGE SCALE GENOMIC DNA]</scope>
    <source>
        <strain>MAFF 311018</strain>
    </source>
</reference>
<sequence>MPHVVARSGDVMSSAAPPSCTSLLGLSLSMFVAPCTLTAAPLDTPVVNAPAPTPPTPDQAYPELFQAVQSGELFDDQKHFVDFLPLRDPALINADYLAQHDHPGFDLRKFVDANFEESPPVQTDAIRQDTALREHIDLLWPKLVRSQNHVPPYSSLLSLPHPYVVPGGRFREVYYWDSYFTMLGLVKSGQTTLSRQMLDNFAYLIDTYGHIPNGNRSYYLSRSQPPFFSYMVELQAGVEGQAVYQRYLPQLQKEYAYWMQGSDDVQPGQAARHVVRLADGSVLNRYWDERDTPRPEAWLHDTRTAAEVKDRPAAEVYRDLRAGAESGWDYTSRWLADGQNLRTIRTTAIIPIDLNSLLYHLERTLAQACAQPGAACSRDYAALAQQRKQAIDAHLWNKAGYYADYDWQTRTLSDQITAAALYPLFAGLASDDHAKRTASTVRRTLVRPGGLATTAVKTGQQWDEPNGWAPLQWVAVDGLRRYGEQALARTIGERFLAQVQALFAREHKLVEKYGLETNAAGGGGGEYALQDGFGWTNGVTLMLLNLYPGKGAKAAPAKRVRKTEAAAR</sequence>
<evidence type="ECO:0000255" key="1">
    <source>
        <dbReference type="HAMAP-Rule" id="MF_01060"/>
    </source>
</evidence>